<keyword id="KW-0143">Chaperone</keyword>
<keyword id="KW-0963">Cytoplasm</keyword>
<keyword id="KW-0235">DNA replication</keyword>
<keyword id="KW-0479">Metal-binding</keyword>
<keyword id="KW-1185">Reference proteome</keyword>
<keyword id="KW-0677">Repeat</keyword>
<keyword id="KW-0346">Stress response</keyword>
<keyword id="KW-0862">Zinc</keyword>
<keyword id="KW-0863">Zinc-finger</keyword>
<proteinExistence type="inferred from homology"/>
<reference key="1">
    <citation type="journal article" date="2003" name="DNA Res.">
        <title>Complete genome structure of Gloeobacter violaceus PCC 7421, a cyanobacterium that lacks thylakoids.</title>
        <authorList>
            <person name="Nakamura Y."/>
            <person name="Kaneko T."/>
            <person name="Sato S."/>
            <person name="Mimuro M."/>
            <person name="Miyashita H."/>
            <person name="Tsuchiya T."/>
            <person name="Sasamoto S."/>
            <person name="Watanabe A."/>
            <person name="Kawashima K."/>
            <person name="Kishida Y."/>
            <person name="Kiyokawa C."/>
            <person name="Kohara M."/>
            <person name="Matsumoto M."/>
            <person name="Matsuno A."/>
            <person name="Nakazaki N."/>
            <person name="Shimpo S."/>
            <person name="Takeuchi C."/>
            <person name="Yamada M."/>
            <person name="Tabata S."/>
        </authorList>
    </citation>
    <scope>NUCLEOTIDE SEQUENCE [LARGE SCALE GENOMIC DNA]</scope>
    <source>
        <strain>ATCC 29082 / PCC 7421</strain>
    </source>
</reference>
<gene>
    <name evidence="1" type="primary">dnaJ</name>
    <name type="ordered locus">glr4267</name>
</gene>
<sequence>MARDLYETLNVSRDASKEDIKRAYRKLARQYHPDVNKDAGAEDTFKELSRAYEVLSDDDQRARYDRFGEAGLNGGVGGGPGDFAGAAGFGDISDIFESFFGGFAGAGTGGRRATRPGGPTRGDDLRYDMVLEFQEAIFGGEKEITINHLITCETCRGSGSKPGSGPMTCRNCGGQGQIRQARRTPFGLFTQVAACPNCQGTGEVIESPCPTCSGRGRNQKQTTIKITIPAGVDAGSRLRVQGEGDAGMRGGPPGDLFIYVSVRNHPVFRREGQDIYSIAEISYLQAILGSQMSVETVDGPQTVVVPPGTQPETVLTLDGKGVPRIGNPTRRGNHYLQLKVVIPTKLGAEERELLTKLAKARGEKVSKKEGLEGLIDSIGNLFH</sequence>
<comment type="function">
    <text evidence="1">Participates actively in the response to hyperosmotic and heat shock by preventing the aggregation of stress-denatured proteins and by disaggregating proteins, also in an autonomous, DnaK-independent fashion. Unfolded proteins bind initially to DnaJ; upon interaction with the DnaJ-bound protein, DnaK hydrolyzes its bound ATP, resulting in the formation of a stable complex. GrpE releases ADP from DnaK; ATP binding to DnaK triggers the release of the substrate protein, thus completing the reaction cycle. Several rounds of ATP-dependent interactions between DnaJ, DnaK and GrpE are required for fully efficient folding. Also involved, together with DnaK and GrpE, in the DNA replication of plasmids through activation of initiation proteins.</text>
</comment>
<comment type="cofactor">
    <cofactor evidence="1">
        <name>Zn(2+)</name>
        <dbReference type="ChEBI" id="CHEBI:29105"/>
    </cofactor>
    <text evidence="1">Binds 2 Zn(2+) ions per monomer.</text>
</comment>
<comment type="subunit">
    <text evidence="1">Homodimer.</text>
</comment>
<comment type="subcellular location">
    <subcellularLocation>
        <location evidence="1">Cytoplasm</location>
    </subcellularLocation>
</comment>
<comment type="domain">
    <text evidence="1">The J domain is necessary and sufficient to stimulate DnaK ATPase activity. Zinc center 1 plays an important role in the autonomous, DnaK-independent chaperone activity of DnaJ. Zinc center 2 is essential for interaction with DnaK and for DnaJ activity.</text>
</comment>
<comment type="similarity">
    <text evidence="1">Belongs to the DnaJ family.</text>
</comment>
<evidence type="ECO:0000255" key="1">
    <source>
        <dbReference type="HAMAP-Rule" id="MF_01152"/>
    </source>
</evidence>
<dbReference type="EMBL" id="BA000045">
    <property type="protein sequence ID" value="BAC92208.1"/>
    <property type="molecule type" value="Genomic_DNA"/>
</dbReference>
<dbReference type="RefSeq" id="NP_927213.1">
    <property type="nucleotide sequence ID" value="NC_005125.1"/>
</dbReference>
<dbReference type="RefSeq" id="WP_011144251.1">
    <property type="nucleotide sequence ID" value="NC_005125.1"/>
</dbReference>
<dbReference type="SMR" id="Q7NDG8"/>
<dbReference type="FunCoup" id="Q7NDG8">
    <property type="interactions" value="364"/>
</dbReference>
<dbReference type="STRING" id="251221.gene:10761786"/>
<dbReference type="EnsemblBacteria" id="BAC92208">
    <property type="protein sequence ID" value="BAC92208"/>
    <property type="gene ID" value="BAC92208"/>
</dbReference>
<dbReference type="KEGG" id="gvi:glr4267"/>
<dbReference type="PATRIC" id="fig|251221.4.peg.4296"/>
<dbReference type="eggNOG" id="COG0484">
    <property type="taxonomic scope" value="Bacteria"/>
</dbReference>
<dbReference type="HOGENOM" id="CLU_017633_0_1_3"/>
<dbReference type="InParanoid" id="Q7NDG8"/>
<dbReference type="OrthoDB" id="9779889at2"/>
<dbReference type="PhylomeDB" id="Q7NDG8"/>
<dbReference type="Proteomes" id="UP000000557">
    <property type="component" value="Chromosome"/>
</dbReference>
<dbReference type="GO" id="GO:0005737">
    <property type="term" value="C:cytoplasm"/>
    <property type="evidence" value="ECO:0000318"/>
    <property type="project" value="GO_Central"/>
</dbReference>
<dbReference type="GO" id="GO:0005524">
    <property type="term" value="F:ATP binding"/>
    <property type="evidence" value="ECO:0007669"/>
    <property type="project" value="InterPro"/>
</dbReference>
<dbReference type="GO" id="GO:0031072">
    <property type="term" value="F:heat shock protein binding"/>
    <property type="evidence" value="ECO:0007669"/>
    <property type="project" value="InterPro"/>
</dbReference>
<dbReference type="GO" id="GO:0051082">
    <property type="term" value="F:unfolded protein binding"/>
    <property type="evidence" value="ECO:0000318"/>
    <property type="project" value="GO_Central"/>
</dbReference>
<dbReference type="GO" id="GO:0008270">
    <property type="term" value="F:zinc ion binding"/>
    <property type="evidence" value="ECO:0007669"/>
    <property type="project" value="UniProtKB-UniRule"/>
</dbReference>
<dbReference type="GO" id="GO:0051085">
    <property type="term" value="P:chaperone cofactor-dependent protein refolding"/>
    <property type="evidence" value="ECO:0000318"/>
    <property type="project" value="GO_Central"/>
</dbReference>
<dbReference type="GO" id="GO:0006260">
    <property type="term" value="P:DNA replication"/>
    <property type="evidence" value="ECO:0007669"/>
    <property type="project" value="UniProtKB-KW"/>
</dbReference>
<dbReference type="GO" id="GO:0042026">
    <property type="term" value="P:protein refolding"/>
    <property type="evidence" value="ECO:0000318"/>
    <property type="project" value="GO_Central"/>
</dbReference>
<dbReference type="GO" id="GO:0009408">
    <property type="term" value="P:response to heat"/>
    <property type="evidence" value="ECO:0007669"/>
    <property type="project" value="InterPro"/>
</dbReference>
<dbReference type="CDD" id="cd06257">
    <property type="entry name" value="DnaJ"/>
    <property type="match status" value="1"/>
</dbReference>
<dbReference type="CDD" id="cd10747">
    <property type="entry name" value="DnaJ_C"/>
    <property type="match status" value="1"/>
</dbReference>
<dbReference type="CDD" id="cd10719">
    <property type="entry name" value="DnaJ_zf"/>
    <property type="match status" value="1"/>
</dbReference>
<dbReference type="FunFam" id="2.60.260.20:FF:000005">
    <property type="entry name" value="Chaperone protein dnaJ 1, mitochondrial"/>
    <property type="match status" value="1"/>
</dbReference>
<dbReference type="FunFam" id="2.10.230.10:FF:000002">
    <property type="entry name" value="Molecular chaperone DnaJ"/>
    <property type="match status" value="1"/>
</dbReference>
<dbReference type="Gene3D" id="1.10.287.110">
    <property type="entry name" value="DnaJ domain"/>
    <property type="match status" value="1"/>
</dbReference>
<dbReference type="Gene3D" id="2.10.230.10">
    <property type="entry name" value="Heat shock protein DnaJ, cysteine-rich domain"/>
    <property type="match status" value="1"/>
</dbReference>
<dbReference type="Gene3D" id="2.60.260.20">
    <property type="entry name" value="Urease metallochaperone UreE, N-terminal domain"/>
    <property type="match status" value="2"/>
</dbReference>
<dbReference type="HAMAP" id="MF_01152">
    <property type="entry name" value="DnaJ"/>
    <property type="match status" value="1"/>
</dbReference>
<dbReference type="InterPro" id="IPR012724">
    <property type="entry name" value="DnaJ"/>
</dbReference>
<dbReference type="InterPro" id="IPR002939">
    <property type="entry name" value="DnaJ_C"/>
</dbReference>
<dbReference type="InterPro" id="IPR001623">
    <property type="entry name" value="DnaJ_domain"/>
</dbReference>
<dbReference type="InterPro" id="IPR018253">
    <property type="entry name" value="DnaJ_domain_CS"/>
</dbReference>
<dbReference type="InterPro" id="IPR008971">
    <property type="entry name" value="HSP40/DnaJ_pept-bd"/>
</dbReference>
<dbReference type="InterPro" id="IPR001305">
    <property type="entry name" value="HSP_DnaJ_Cys-rich_dom"/>
</dbReference>
<dbReference type="InterPro" id="IPR036410">
    <property type="entry name" value="HSP_DnaJ_Cys-rich_dom_sf"/>
</dbReference>
<dbReference type="InterPro" id="IPR036869">
    <property type="entry name" value="J_dom_sf"/>
</dbReference>
<dbReference type="NCBIfam" id="TIGR02349">
    <property type="entry name" value="DnaJ_bact"/>
    <property type="match status" value="1"/>
</dbReference>
<dbReference type="NCBIfam" id="NF008035">
    <property type="entry name" value="PRK10767.1"/>
    <property type="match status" value="1"/>
</dbReference>
<dbReference type="NCBIfam" id="NF010886">
    <property type="entry name" value="PRK14293.1"/>
    <property type="match status" value="1"/>
</dbReference>
<dbReference type="PANTHER" id="PTHR43096:SF10">
    <property type="entry name" value="CHAPERONE PROTEIN DNAJ A6, CHLOROPLASTIC"/>
    <property type="match status" value="1"/>
</dbReference>
<dbReference type="PANTHER" id="PTHR43096">
    <property type="entry name" value="DNAJ HOMOLOG 1, MITOCHONDRIAL-RELATED"/>
    <property type="match status" value="1"/>
</dbReference>
<dbReference type="Pfam" id="PF00226">
    <property type="entry name" value="DnaJ"/>
    <property type="match status" value="1"/>
</dbReference>
<dbReference type="Pfam" id="PF01556">
    <property type="entry name" value="DnaJ_C"/>
    <property type="match status" value="1"/>
</dbReference>
<dbReference type="Pfam" id="PF00684">
    <property type="entry name" value="DnaJ_CXXCXGXG"/>
    <property type="match status" value="1"/>
</dbReference>
<dbReference type="PRINTS" id="PR00625">
    <property type="entry name" value="JDOMAIN"/>
</dbReference>
<dbReference type="SMART" id="SM00271">
    <property type="entry name" value="DnaJ"/>
    <property type="match status" value="1"/>
</dbReference>
<dbReference type="SUPFAM" id="SSF46565">
    <property type="entry name" value="Chaperone J-domain"/>
    <property type="match status" value="1"/>
</dbReference>
<dbReference type="SUPFAM" id="SSF57938">
    <property type="entry name" value="DnaJ/Hsp40 cysteine-rich domain"/>
    <property type="match status" value="1"/>
</dbReference>
<dbReference type="SUPFAM" id="SSF49493">
    <property type="entry name" value="HSP40/DnaJ peptide-binding domain"/>
    <property type="match status" value="2"/>
</dbReference>
<dbReference type="PROSITE" id="PS00636">
    <property type="entry name" value="DNAJ_1"/>
    <property type="match status" value="1"/>
</dbReference>
<dbReference type="PROSITE" id="PS50076">
    <property type="entry name" value="DNAJ_2"/>
    <property type="match status" value="1"/>
</dbReference>
<dbReference type="PROSITE" id="PS51188">
    <property type="entry name" value="ZF_CR"/>
    <property type="match status" value="1"/>
</dbReference>
<name>DNAJ_GLOVI</name>
<accession>Q7NDG8</accession>
<feature type="chain" id="PRO_0000070791" description="Chaperone protein DnaJ">
    <location>
        <begin position="1"/>
        <end position="383"/>
    </location>
</feature>
<feature type="domain" description="J" evidence="1">
    <location>
        <begin position="4"/>
        <end position="68"/>
    </location>
</feature>
<feature type="repeat" description="CXXCXGXG motif">
    <location>
        <begin position="152"/>
        <end position="159"/>
    </location>
</feature>
<feature type="repeat" description="CXXCXGXG motif">
    <location>
        <begin position="169"/>
        <end position="176"/>
    </location>
</feature>
<feature type="repeat" description="CXXCXGXG motif">
    <location>
        <begin position="195"/>
        <end position="202"/>
    </location>
</feature>
<feature type="repeat" description="CXXCXGXG motif">
    <location>
        <begin position="209"/>
        <end position="216"/>
    </location>
</feature>
<feature type="zinc finger region" description="CR-type" evidence="1">
    <location>
        <begin position="139"/>
        <end position="221"/>
    </location>
</feature>
<feature type="binding site" evidence="1">
    <location>
        <position position="152"/>
    </location>
    <ligand>
        <name>Zn(2+)</name>
        <dbReference type="ChEBI" id="CHEBI:29105"/>
        <label>1</label>
    </ligand>
</feature>
<feature type="binding site" evidence="1">
    <location>
        <position position="155"/>
    </location>
    <ligand>
        <name>Zn(2+)</name>
        <dbReference type="ChEBI" id="CHEBI:29105"/>
        <label>1</label>
    </ligand>
</feature>
<feature type="binding site" evidence="1">
    <location>
        <position position="169"/>
    </location>
    <ligand>
        <name>Zn(2+)</name>
        <dbReference type="ChEBI" id="CHEBI:29105"/>
        <label>2</label>
    </ligand>
</feature>
<feature type="binding site" evidence="1">
    <location>
        <position position="172"/>
    </location>
    <ligand>
        <name>Zn(2+)</name>
        <dbReference type="ChEBI" id="CHEBI:29105"/>
        <label>2</label>
    </ligand>
</feature>
<feature type="binding site" evidence="1">
    <location>
        <position position="195"/>
    </location>
    <ligand>
        <name>Zn(2+)</name>
        <dbReference type="ChEBI" id="CHEBI:29105"/>
        <label>2</label>
    </ligand>
</feature>
<feature type="binding site" evidence="1">
    <location>
        <position position="198"/>
    </location>
    <ligand>
        <name>Zn(2+)</name>
        <dbReference type="ChEBI" id="CHEBI:29105"/>
        <label>2</label>
    </ligand>
</feature>
<feature type="binding site" evidence="1">
    <location>
        <position position="209"/>
    </location>
    <ligand>
        <name>Zn(2+)</name>
        <dbReference type="ChEBI" id="CHEBI:29105"/>
        <label>1</label>
    </ligand>
</feature>
<feature type="binding site" evidence="1">
    <location>
        <position position="212"/>
    </location>
    <ligand>
        <name>Zn(2+)</name>
        <dbReference type="ChEBI" id="CHEBI:29105"/>
        <label>1</label>
    </ligand>
</feature>
<protein>
    <recommendedName>
        <fullName evidence="1">Chaperone protein DnaJ</fullName>
    </recommendedName>
</protein>
<organism>
    <name type="scientific">Gloeobacter violaceus (strain ATCC 29082 / PCC 7421)</name>
    <dbReference type="NCBI Taxonomy" id="251221"/>
    <lineage>
        <taxon>Bacteria</taxon>
        <taxon>Bacillati</taxon>
        <taxon>Cyanobacteriota</taxon>
        <taxon>Cyanophyceae</taxon>
        <taxon>Gloeobacterales</taxon>
        <taxon>Gloeobacteraceae</taxon>
        <taxon>Gloeobacter</taxon>
    </lineage>
</organism>